<comment type="catalytic activity">
    <reaction evidence="1">
        <text>a quinone + NADH + H(+) = a quinol + NAD(+)</text>
        <dbReference type="Rhea" id="RHEA:46160"/>
        <dbReference type="ChEBI" id="CHEBI:15378"/>
        <dbReference type="ChEBI" id="CHEBI:24646"/>
        <dbReference type="ChEBI" id="CHEBI:57540"/>
        <dbReference type="ChEBI" id="CHEBI:57945"/>
        <dbReference type="ChEBI" id="CHEBI:132124"/>
        <dbReference type="EC" id="1.6.5.2"/>
    </reaction>
</comment>
<comment type="catalytic activity">
    <reaction evidence="1">
        <text>a quinone + NADPH + H(+) = a quinol + NADP(+)</text>
        <dbReference type="Rhea" id="RHEA:46164"/>
        <dbReference type="ChEBI" id="CHEBI:15378"/>
        <dbReference type="ChEBI" id="CHEBI:24646"/>
        <dbReference type="ChEBI" id="CHEBI:57783"/>
        <dbReference type="ChEBI" id="CHEBI:58349"/>
        <dbReference type="ChEBI" id="CHEBI:132124"/>
        <dbReference type="EC" id="1.6.5.2"/>
    </reaction>
</comment>
<comment type="cofactor">
    <cofactor evidence="1">
        <name>FMN</name>
        <dbReference type="ChEBI" id="CHEBI:58210"/>
    </cofactor>
    <text evidence="1">Binds 1 FMN per monomer.</text>
</comment>
<comment type="similarity">
    <text evidence="1">Belongs to the WrbA family.</text>
</comment>
<reference key="1">
    <citation type="submission" date="2007-04" db="EMBL/GenBank/DDBJ databases">
        <title>Complete genome sequence of the nitrogen-fixing bacterium Azorhizobium caulinodans ORS571.</title>
        <authorList>
            <person name="Lee K.B."/>
            <person name="Backer P.D."/>
            <person name="Aono T."/>
            <person name="Liu C.T."/>
            <person name="Suzuki S."/>
            <person name="Suzuki T."/>
            <person name="Kaneko T."/>
            <person name="Yamada M."/>
            <person name="Tabata S."/>
            <person name="Kupfer D.M."/>
            <person name="Najar F.Z."/>
            <person name="Wiley G.B."/>
            <person name="Roe B."/>
            <person name="Binnewies T."/>
            <person name="Ussery D."/>
            <person name="Vereecke D."/>
            <person name="Gevers D."/>
            <person name="Holsters M."/>
            <person name="Oyaizu H."/>
        </authorList>
    </citation>
    <scope>NUCLEOTIDE SEQUENCE [LARGE SCALE GENOMIC DNA]</scope>
    <source>
        <strain>ATCC 43989 / DSM 5975 / JCM 20966 / LMG 6465 / NBRC 14845 / NCIMB 13405 / ORS 571</strain>
    </source>
</reference>
<feature type="chain" id="PRO_1000084127" description="NAD(P)H dehydrogenase (quinone)">
    <location>
        <begin position="1"/>
        <end position="199"/>
    </location>
</feature>
<feature type="domain" description="Flavodoxin-like" evidence="1">
    <location>
        <begin position="4"/>
        <end position="190"/>
    </location>
</feature>
<feature type="binding site" evidence="1">
    <location>
        <begin position="10"/>
        <end position="15"/>
    </location>
    <ligand>
        <name>FMN</name>
        <dbReference type="ChEBI" id="CHEBI:58210"/>
    </ligand>
</feature>
<feature type="binding site" evidence="1">
    <location>
        <position position="12"/>
    </location>
    <ligand>
        <name>NAD(+)</name>
        <dbReference type="ChEBI" id="CHEBI:57540"/>
    </ligand>
</feature>
<feature type="binding site" evidence="1">
    <location>
        <begin position="78"/>
        <end position="80"/>
    </location>
    <ligand>
        <name>FMN</name>
        <dbReference type="ChEBI" id="CHEBI:58210"/>
    </ligand>
</feature>
<feature type="binding site" evidence="1">
    <location>
        <position position="98"/>
    </location>
    <ligand>
        <name>substrate</name>
    </ligand>
</feature>
<feature type="binding site" evidence="1">
    <location>
        <begin position="113"/>
        <end position="119"/>
    </location>
    <ligand>
        <name>FMN</name>
        <dbReference type="ChEBI" id="CHEBI:58210"/>
    </ligand>
</feature>
<feature type="binding site" evidence="1">
    <location>
        <position position="134"/>
    </location>
    <ligand>
        <name>FMN</name>
        <dbReference type="ChEBI" id="CHEBI:58210"/>
    </ligand>
</feature>
<gene>
    <name type="ordered locus">AZC_4089</name>
</gene>
<evidence type="ECO:0000255" key="1">
    <source>
        <dbReference type="HAMAP-Rule" id="MF_01017"/>
    </source>
</evidence>
<organism>
    <name type="scientific">Azorhizobium caulinodans (strain ATCC 43989 / DSM 5975 / JCM 20966 / LMG 6465 / NBRC 14845 / NCIMB 13405 / ORS 571)</name>
    <dbReference type="NCBI Taxonomy" id="438753"/>
    <lineage>
        <taxon>Bacteria</taxon>
        <taxon>Pseudomonadati</taxon>
        <taxon>Pseudomonadota</taxon>
        <taxon>Alphaproteobacteria</taxon>
        <taxon>Hyphomicrobiales</taxon>
        <taxon>Xanthobacteraceae</taxon>
        <taxon>Azorhizobium</taxon>
    </lineage>
</organism>
<proteinExistence type="inferred from homology"/>
<keyword id="KW-0285">Flavoprotein</keyword>
<keyword id="KW-0288">FMN</keyword>
<keyword id="KW-0520">NAD</keyword>
<keyword id="KW-0521">NADP</keyword>
<keyword id="KW-0547">Nucleotide-binding</keyword>
<keyword id="KW-0560">Oxidoreductase</keyword>
<keyword id="KW-1185">Reference proteome</keyword>
<sequence length="199" mass="20673">MAKVLVLYYSTYGHLETMANAVAEGARAAGATVDVKRVPETAPDEVAKAAHFKLDQAAPVATIADLEHYDAIIVGAPTRFGRIASQMAAFLDQAGGLWFRGALNGKVGAAFTSTATQHGGQETTLFSIITNLLHFGMVIVGLPYSHQGQMSMSEIVGGAPYGATTLAAGDGSRQPSEIDLAGARHQGELVAKTAAKLFG</sequence>
<dbReference type="EC" id="1.6.5.2" evidence="1"/>
<dbReference type="EMBL" id="AP009384">
    <property type="protein sequence ID" value="BAF90087.1"/>
    <property type="molecule type" value="Genomic_DNA"/>
</dbReference>
<dbReference type="RefSeq" id="WP_012172609.1">
    <property type="nucleotide sequence ID" value="NC_009937.1"/>
</dbReference>
<dbReference type="SMR" id="A8HRS7"/>
<dbReference type="STRING" id="438753.AZC_4089"/>
<dbReference type="KEGG" id="azc:AZC_4089"/>
<dbReference type="eggNOG" id="COG0655">
    <property type="taxonomic scope" value="Bacteria"/>
</dbReference>
<dbReference type="HOGENOM" id="CLU_051402_0_2_5"/>
<dbReference type="Proteomes" id="UP000000270">
    <property type="component" value="Chromosome"/>
</dbReference>
<dbReference type="GO" id="GO:0016020">
    <property type="term" value="C:membrane"/>
    <property type="evidence" value="ECO:0007669"/>
    <property type="project" value="TreeGrafter"/>
</dbReference>
<dbReference type="GO" id="GO:0050660">
    <property type="term" value="F:flavin adenine dinucleotide binding"/>
    <property type="evidence" value="ECO:0007669"/>
    <property type="project" value="UniProtKB-UniRule"/>
</dbReference>
<dbReference type="GO" id="GO:0010181">
    <property type="term" value="F:FMN binding"/>
    <property type="evidence" value="ECO:0007669"/>
    <property type="project" value="InterPro"/>
</dbReference>
<dbReference type="GO" id="GO:0051287">
    <property type="term" value="F:NAD binding"/>
    <property type="evidence" value="ECO:0007669"/>
    <property type="project" value="UniProtKB-UniRule"/>
</dbReference>
<dbReference type="GO" id="GO:0050136">
    <property type="term" value="F:NADH:ubiquinone reductase (non-electrogenic) activity"/>
    <property type="evidence" value="ECO:0007669"/>
    <property type="project" value="RHEA"/>
</dbReference>
<dbReference type="GO" id="GO:0050661">
    <property type="term" value="F:NADP binding"/>
    <property type="evidence" value="ECO:0007669"/>
    <property type="project" value="UniProtKB-UniRule"/>
</dbReference>
<dbReference type="GO" id="GO:0008753">
    <property type="term" value="F:NADPH dehydrogenase (quinone) activity"/>
    <property type="evidence" value="ECO:0007669"/>
    <property type="project" value="RHEA"/>
</dbReference>
<dbReference type="FunFam" id="3.40.50.360:FF:000001">
    <property type="entry name" value="NAD(P)H dehydrogenase (Quinone) FQR1-like"/>
    <property type="match status" value="1"/>
</dbReference>
<dbReference type="Gene3D" id="3.40.50.360">
    <property type="match status" value="1"/>
</dbReference>
<dbReference type="HAMAP" id="MF_01017">
    <property type="entry name" value="NQOR"/>
    <property type="match status" value="1"/>
</dbReference>
<dbReference type="InterPro" id="IPR008254">
    <property type="entry name" value="Flavodoxin/NO_synth"/>
</dbReference>
<dbReference type="InterPro" id="IPR029039">
    <property type="entry name" value="Flavoprotein-like_sf"/>
</dbReference>
<dbReference type="InterPro" id="IPR010089">
    <property type="entry name" value="Flavoprotein_WrbA-like"/>
</dbReference>
<dbReference type="InterPro" id="IPR005025">
    <property type="entry name" value="FMN_Rdtase-like_dom"/>
</dbReference>
<dbReference type="InterPro" id="IPR037513">
    <property type="entry name" value="NQO"/>
</dbReference>
<dbReference type="NCBIfam" id="TIGR01755">
    <property type="entry name" value="flav_wrbA"/>
    <property type="match status" value="1"/>
</dbReference>
<dbReference type="NCBIfam" id="NF002999">
    <property type="entry name" value="PRK03767.1"/>
    <property type="match status" value="1"/>
</dbReference>
<dbReference type="PANTHER" id="PTHR30546">
    <property type="entry name" value="FLAVODOXIN-RELATED PROTEIN WRBA-RELATED"/>
    <property type="match status" value="1"/>
</dbReference>
<dbReference type="PANTHER" id="PTHR30546:SF23">
    <property type="entry name" value="FLAVOPROTEIN-LIKE PROTEIN YCP4-RELATED"/>
    <property type="match status" value="1"/>
</dbReference>
<dbReference type="Pfam" id="PF03358">
    <property type="entry name" value="FMN_red"/>
    <property type="match status" value="1"/>
</dbReference>
<dbReference type="SUPFAM" id="SSF52218">
    <property type="entry name" value="Flavoproteins"/>
    <property type="match status" value="1"/>
</dbReference>
<dbReference type="PROSITE" id="PS50902">
    <property type="entry name" value="FLAVODOXIN_LIKE"/>
    <property type="match status" value="1"/>
</dbReference>
<name>NQOR_AZOC5</name>
<accession>A8HRS7</accession>
<protein>
    <recommendedName>
        <fullName evidence="1">NAD(P)H dehydrogenase (quinone)</fullName>
        <ecNumber evidence="1">1.6.5.2</ecNumber>
    </recommendedName>
    <alternativeName>
        <fullName>Flavoprotein WrbA</fullName>
    </alternativeName>
    <alternativeName>
        <fullName evidence="1">NAD(P)H:quinone oxidoreductase</fullName>
        <shortName evidence="1">NQO</shortName>
    </alternativeName>
</protein>